<organism>
    <name type="scientific">Bordetella parapertussis (strain 12822 / ATCC BAA-587 / NCTC 13253)</name>
    <dbReference type="NCBI Taxonomy" id="257311"/>
    <lineage>
        <taxon>Bacteria</taxon>
        <taxon>Pseudomonadati</taxon>
        <taxon>Pseudomonadota</taxon>
        <taxon>Betaproteobacteria</taxon>
        <taxon>Burkholderiales</taxon>
        <taxon>Alcaligenaceae</taxon>
        <taxon>Bordetella</taxon>
    </lineage>
</organism>
<dbReference type="EC" id="5.1.3.20" evidence="1"/>
<dbReference type="EMBL" id="BX640432">
    <property type="protein sequence ID" value="CAE38408.1"/>
    <property type="molecule type" value="Genomic_DNA"/>
</dbReference>
<dbReference type="RefSeq" id="WP_003813348.1">
    <property type="nucleotide sequence ID" value="NC_002928.3"/>
</dbReference>
<dbReference type="SMR" id="Q7W609"/>
<dbReference type="GeneID" id="93204904"/>
<dbReference type="KEGG" id="bpa:BPP3123"/>
<dbReference type="HOGENOM" id="CLU_007383_1_3_4"/>
<dbReference type="UniPathway" id="UPA00356">
    <property type="reaction ID" value="UER00440"/>
</dbReference>
<dbReference type="UniPathway" id="UPA00958"/>
<dbReference type="Proteomes" id="UP000001421">
    <property type="component" value="Chromosome"/>
</dbReference>
<dbReference type="GO" id="GO:0008712">
    <property type="term" value="F:ADP-glyceromanno-heptose 6-epimerase activity"/>
    <property type="evidence" value="ECO:0007669"/>
    <property type="project" value="UniProtKB-UniRule"/>
</dbReference>
<dbReference type="GO" id="GO:0050661">
    <property type="term" value="F:NADP binding"/>
    <property type="evidence" value="ECO:0007669"/>
    <property type="project" value="InterPro"/>
</dbReference>
<dbReference type="GO" id="GO:0097171">
    <property type="term" value="P:ADP-L-glycero-beta-D-manno-heptose biosynthetic process"/>
    <property type="evidence" value="ECO:0007669"/>
    <property type="project" value="UniProtKB-UniPathway"/>
</dbReference>
<dbReference type="GO" id="GO:0009244">
    <property type="term" value="P:lipopolysaccharide core region biosynthetic process"/>
    <property type="evidence" value="ECO:0007669"/>
    <property type="project" value="UniProtKB-UniPathway"/>
</dbReference>
<dbReference type="CDD" id="cd05248">
    <property type="entry name" value="ADP_GME_SDR_e"/>
    <property type="match status" value="1"/>
</dbReference>
<dbReference type="Gene3D" id="3.40.50.720">
    <property type="entry name" value="NAD(P)-binding Rossmann-like Domain"/>
    <property type="match status" value="1"/>
</dbReference>
<dbReference type="Gene3D" id="3.90.25.10">
    <property type="entry name" value="UDP-galactose 4-epimerase, domain 1"/>
    <property type="match status" value="1"/>
</dbReference>
<dbReference type="HAMAP" id="MF_01601">
    <property type="entry name" value="Heptose_epimerase"/>
    <property type="match status" value="1"/>
</dbReference>
<dbReference type="InterPro" id="IPR001509">
    <property type="entry name" value="Epimerase_deHydtase"/>
</dbReference>
<dbReference type="InterPro" id="IPR011912">
    <property type="entry name" value="Heptose_epim"/>
</dbReference>
<dbReference type="InterPro" id="IPR036291">
    <property type="entry name" value="NAD(P)-bd_dom_sf"/>
</dbReference>
<dbReference type="NCBIfam" id="TIGR02197">
    <property type="entry name" value="heptose_epim"/>
    <property type="match status" value="1"/>
</dbReference>
<dbReference type="PANTHER" id="PTHR43103:SF3">
    <property type="entry name" value="ADP-L-GLYCERO-D-MANNO-HEPTOSE-6-EPIMERASE"/>
    <property type="match status" value="1"/>
</dbReference>
<dbReference type="PANTHER" id="PTHR43103">
    <property type="entry name" value="NUCLEOSIDE-DIPHOSPHATE-SUGAR EPIMERASE"/>
    <property type="match status" value="1"/>
</dbReference>
<dbReference type="Pfam" id="PF01370">
    <property type="entry name" value="Epimerase"/>
    <property type="match status" value="1"/>
</dbReference>
<dbReference type="SUPFAM" id="SSF51735">
    <property type="entry name" value="NAD(P)-binding Rossmann-fold domains"/>
    <property type="match status" value="1"/>
</dbReference>
<comment type="function">
    <text evidence="1">Catalyzes the interconversion between ADP-D-glycero-beta-D-manno-heptose and ADP-L-glycero-beta-D-manno-heptose via an epimerization at carbon 6 of the heptose.</text>
</comment>
<comment type="catalytic activity">
    <reaction evidence="1">
        <text>ADP-D-glycero-beta-D-manno-heptose = ADP-L-glycero-beta-D-manno-heptose</text>
        <dbReference type="Rhea" id="RHEA:17577"/>
        <dbReference type="ChEBI" id="CHEBI:59967"/>
        <dbReference type="ChEBI" id="CHEBI:61506"/>
        <dbReference type="EC" id="5.1.3.20"/>
    </reaction>
</comment>
<comment type="cofactor">
    <cofactor evidence="1">
        <name>NADP(+)</name>
        <dbReference type="ChEBI" id="CHEBI:58349"/>
    </cofactor>
    <text evidence="1">Binds 1 NADP(+) per subunit.</text>
</comment>
<comment type="pathway">
    <text evidence="1">Nucleotide-sugar biosynthesis; ADP-L-glycero-beta-D-manno-heptose biosynthesis; ADP-L-glycero-beta-D-manno-heptose from D-glycero-beta-D-manno-heptose 7-phosphate: step 4/4.</text>
</comment>
<comment type="pathway">
    <text>Bacterial outer membrane biogenesis; LPS core biosynthesis.</text>
</comment>
<comment type="subunit">
    <text evidence="1">Homopentamer.</text>
</comment>
<comment type="domain">
    <text evidence="1">Contains a large N-terminal NADP-binding domain, and a smaller C-terminal substrate-binding domain.</text>
</comment>
<comment type="similarity">
    <text evidence="1">Belongs to the NAD(P)-dependent epimerase/dehydratase family. HldD subfamily.</text>
</comment>
<accession>Q7W609</accession>
<name>HLDD_BORPA</name>
<proteinExistence type="inferred from homology"/>
<reference key="1">
    <citation type="journal article" date="2003" name="Nat. Genet.">
        <title>Comparative analysis of the genome sequences of Bordetella pertussis, Bordetella parapertussis and Bordetella bronchiseptica.</title>
        <authorList>
            <person name="Parkhill J."/>
            <person name="Sebaihia M."/>
            <person name="Preston A."/>
            <person name="Murphy L.D."/>
            <person name="Thomson N.R."/>
            <person name="Harris D.E."/>
            <person name="Holden M.T.G."/>
            <person name="Churcher C.M."/>
            <person name="Bentley S.D."/>
            <person name="Mungall K.L."/>
            <person name="Cerdeno-Tarraga A.-M."/>
            <person name="Temple L."/>
            <person name="James K.D."/>
            <person name="Harris B."/>
            <person name="Quail M.A."/>
            <person name="Achtman M."/>
            <person name="Atkin R."/>
            <person name="Baker S."/>
            <person name="Basham D."/>
            <person name="Bason N."/>
            <person name="Cherevach I."/>
            <person name="Chillingworth T."/>
            <person name="Collins M."/>
            <person name="Cronin A."/>
            <person name="Davis P."/>
            <person name="Doggett J."/>
            <person name="Feltwell T."/>
            <person name="Goble A."/>
            <person name="Hamlin N."/>
            <person name="Hauser H."/>
            <person name="Holroyd S."/>
            <person name="Jagels K."/>
            <person name="Leather S."/>
            <person name="Moule S."/>
            <person name="Norberczak H."/>
            <person name="O'Neil S."/>
            <person name="Ormond D."/>
            <person name="Price C."/>
            <person name="Rabbinowitsch E."/>
            <person name="Rutter S."/>
            <person name="Sanders M."/>
            <person name="Saunders D."/>
            <person name="Seeger K."/>
            <person name="Sharp S."/>
            <person name="Simmonds M."/>
            <person name="Skelton J."/>
            <person name="Squares R."/>
            <person name="Squares S."/>
            <person name="Stevens K."/>
            <person name="Unwin L."/>
            <person name="Whitehead S."/>
            <person name="Barrell B.G."/>
            <person name="Maskell D.J."/>
        </authorList>
    </citation>
    <scope>NUCLEOTIDE SEQUENCE [LARGE SCALE GENOMIC DNA]</scope>
    <source>
        <strain>12822 / ATCC BAA-587 / NCTC 13253</strain>
    </source>
</reference>
<keyword id="KW-0119">Carbohydrate metabolism</keyword>
<keyword id="KW-0413">Isomerase</keyword>
<keyword id="KW-0521">NADP</keyword>
<evidence type="ECO:0000255" key="1">
    <source>
        <dbReference type="HAMAP-Rule" id="MF_01601"/>
    </source>
</evidence>
<feature type="chain" id="PRO_0000205788" description="ADP-L-glycero-D-manno-heptose-6-epimerase">
    <location>
        <begin position="1"/>
        <end position="329"/>
    </location>
</feature>
<feature type="active site" description="Proton acceptor" evidence="1">
    <location>
        <position position="138"/>
    </location>
</feature>
<feature type="active site" description="Proton acceptor" evidence="1">
    <location>
        <position position="176"/>
    </location>
</feature>
<feature type="binding site" evidence="1">
    <location>
        <begin position="10"/>
        <end position="11"/>
    </location>
    <ligand>
        <name>NADP(+)</name>
        <dbReference type="ChEBI" id="CHEBI:58349"/>
    </ligand>
</feature>
<feature type="binding site" evidence="1">
    <location>
        <begin position="31"/>
        <end position="32"/>
    </location>
    <ligand>
        <name>NADP(+)</name>
        <dbReference type="ChEBI" id="CHEBI:58349"/>
    </ligand>
</feature>
<feature type="binding site" evidence="1">
    <location>
        <position position="38"/>
    </location>
    <ligand>
        <name>NADP(+)</name>
        <dbReference type="ChEBI" id="CHEBI:58349"/>
    </ligand>
</feature>
<feature type="binding site" evidence="1">
    <location>
        <position position="53"/>
    </location>
    <ligand>
        <name>NADP(+)</name>
        <dbReference type="ChEBI" id="CHEBI:58349"/>
    </ligand>
</feature>
<feature type="binding site" evidence="1">
    <location>
        <begin position="74"/>
        <end position="78"/>
    </location>
    <ligand>
        <name>NADP(+)</name>
        <dbReference type="ChEBI" id="CHEBI:58349"/>
    </ligand>
</feature>
<feature type="binding site" evidence="1">
    <location>
        <position position="91"/>
    </location>
    <ligand>
        <name>NADP(+)</name>
        <dbReference type="ChEBI" id="CHEBI:58349"/>
    </ligand>
</feature>
<feature type="binding site" evidence="1">
    <location>
        <position position="142"/>
    </location>
    <ligand>
        <name>NADP(+)</name>
        <dbReference type="ChEBI" id="CHEBI:58349"/>
    </ligand>
</feature>
<feature type="binding site" evidence="1">
    <location>
        <position position="167"/>
    </location>
    <ligand>
        <name>substrate</name>
    </ligand>
</feature>
<feature type="binding site" evidence="1">
    <location>
        <position position="168"/>
    </location>
    <ligand>
        <name>NADP(+)</name>
        <dbReference type="ChEBI" id="CHEBI:58349"/>
    </ligand>
</feature>
<feature type="binding site" evidence="1">
    <location>
        <position position="176"/>
    </location>
    <ligand>
        <name>NADP(+)</name>
        <dbReference type="ChEBI" id="CHEBI:58349"/>
    </ligand>
</feature>
<feature type="binding site" evidence="1">
    <location>
        <position position="178"/>
    </location>
    <ligand>
        <name>substrate</name>
    </ligand>
</feature>
<feature type="binding site" evidence="1">
    <location>
        <position position="185"/>
    </location>
    <ligand>
        <name>substrate</name>
    </ligand>
</feature>
<feature type="binding site" evidence="1">
    <location>
        <begin position="199"/>
        <end position="202"/>
    </location>
    <ligand>
        <name>substrate</name>
    </ligand>
</feature>
<feature type="binding site" evidence="1">
    <location>
        <position position="212"/>
    </location>
    <ligand>
        <name>substrate</name>
    </ligand>
</feature>
<feature type="binding site" evidence="1">
    <location>
        <position position="291"/>
    </location>
    <ligand>
        <name>substrate</name>
    </ligand>
</feature>
<gene>
    <name evidence="1" type="primary">hldD</name>
    <name type="synonym">htrM</name>
    <name type="synonym">rfaD</name>
    <name type="ordered locus">BPP3123</name>
</gene>
<protein>
    <recommendedName>
        <fullName evidence="1">ADP-L-glycero-D-manno-heptose-6-epimerase</fullName>
        <ecNumber evidence="1">5.1.3.20</ecNumber>
    </recommendedName>
    <alternativeName>
        <fullName evidence="1">ADP-L-glycero-beta-D-manno-heptose-6-epimerase</fullName>
        <shortName evidence="1">ADP-glyceromanno-heptose 6-epimerase</shortName>
        <shortName evidence="1">ADP-hep 6-epimerase</shortName>
        <shortName evidence="1">AGME</shortName>
    </alternativeName>
</protein>
<sequence length="329" mass="36642">MIVVTGAAGFIGSNLVRGLNRRGIQDIIAVDDLTDGDKFRNLVDCSIADYLDKDEFRERVRGGNLPALRAVLHQGACSDTTERNGRYMLDNNYRVTLELFEYCQAERVPFLYASSAAVYGGSSVYVEDPANEHPLNVYGYSKLLFDQVLRTRMDSLTAQVVGLRYFNVYGPHEQHKGRMASVAFHNMNQFLAEGHVRLFAGWDGYEDGGQSRDFISVEDVVAVNLHFLDNPGQSGVFNCGTGRAQPFNDVAAAVVNTLRAERGEAALPLAELVKKGLLRYIPFPDDLKGRYQSYTQADVGRLRAAGFSAPMRDVQTGVSEYVRYWRALK</sequence>